<proteinExistence type="inferred from homology"/>
<comment type="function">
    <text evidence="1">Plays an important role in the de novo pathway of purine nucleotide biosynthesis. Catalyzes the first committed step in the biosynthesis of AMP from IMP.</text>
</comment>
<comment type="catalytic activity">
    <reaction evidence="1">
        <text>IMP + L-aspartate + GTP = N(6)-(1,2-dicarboxyethyl)-AMP + GDP + phosphate + 2 H(+)</text>
        <dbReference type="Rhea" id="RHEA:15753"/>
        <dbReference type="ChEBI" id="CHEBI:15378"/>
        <dbReference type="ChEBI" id="CHEBI:29991"/>
        <dbReference type="ChEBI" id="CHEBI:37565"/>
        <dbReference type="ChEBI" id="CHEBI:43474"/>
        <dbReference type="ChEBI" id="CHEBI:57567"/>
        <dbReference type="ChEBI" id="CHEBI:58053"/>
        <dbReference type="ChEBI" id="CHEBI:58189"/>
        <dbReference type="EC" id="6.3.4.4"/>
    </reaction>
</comment>
<comment type="cofactor">
    <cofactor evidence="1">
        <name>Mg(2+)</name>
        <dbReference type="ChEBI" id="CHEBI:18420"/>
    </cofactor>
    <text evidence="1">Binds 1 Mg(2+) ion per subunit.</text>
</comment>
<comment type="pathway">
    <text evidence="1">Purine metabolism; AMP biosynthesis via de novo pathway; AMP from IMP: step 1/2.</text>
</comment>
<comment type="subunit">
    <text evidence="1">Homodimer.</text>
</comment>
<comment type="subcellular location">
    <subcellularLocation>
        <location evidence="1">Cytoplasm</location>
    </subcellularLocation>
</comment>
<comment type="similarity">
    <text evidence="1">Belongs to the adenylosuccinate synthetase family.</text>
</comment>
<reference key="1">
    <citation type="journal article" date="2000" name="Nature">
        <title>Complete DNA sequence of a serogroup A strain of Neisseria meningitidis Z2491.</title>
        <authorList>
            <person name="Parkhill J."/>
            <person name="Achtman M."/>
            <person name="James K.D."/>
            <person name="Bentley S.D."/>
            <person name="Churcher C.M."/>
            <person name="Klee S.R."/>
            <person name="Morelli G."/>
            <person name="Basham D."/>
            <person name="Brown D."/>
            <person name="Chillingworth T."/>
            <person name="Davies R.M."/>
            <person name="Davis P."/>
            <person name="Devlin K."/>
            <person name="Feltwell T."/>
            <person name="Hamlin N."/>
            <person name="Holroyd S."/>
            <person name="Jagels K."/>
            <person name="Leather S."/>
            <person name="Moule S."/>
            <person name="Mungall K.L."/>
            <person name="Quail M.A."/>
            <person name="Rajandream M.A."/>
            <person name="Rutherford K.M."/>
            <person name="Simmonds M."/>
            <person name="Skelton J."/>
            <person name="Whitehead S."/>
            <person name="Spratt B.G."/>
            <person name="Barrell B.G."/>
        </authorList>
    </citation>
    <scope>NUCLEOTIDE SEQUENCE [LARGE SCALE GENOMIC DNA]</scope>
    <source>
        <strain>DSM 15465 / Z2491</strain>
    </source>
</reference>
<protein>
    <recommendedName>
        <fullName evidence="1">Adenylosuccinate synthetase</fullName>
        <shortName evidence="1">AMPSase</shortName>
        <shortName evidence="1">AdSS</shortName>
        <ecNumber evidence="1">6.3.4.4</ecNumber>
    </recommendedName>
    <alternativeName>
        <fullName evidence="1">IMP--aspartate ligase</fullName>
    </alternativeName>
</protein>
<evidence type="ECO:0000255" key="1">
    <source>
        <dbReference type="HAMAP-Rule" id="MF_00011"/>
    </source>
</evidence>
<name>PURA_NEIMA</name>
<keyword id="KW-0963">Cytoplasm</keyword>
<keyword id="KW-0342">GTP-binding</keyword>
<keyword id="KW-0436">Ligase</keyword>
<keyword id="KW-0460">Magnesium</keyword>
<keyword id="KW-0479">Metal-binding</keyword>
<keyword id="KW-0547">Nucleotide-binding</keyword>
<keyword id="KW-0658">Purine biosynthesis</keyword>
<gene>
    <name evidence="1" type="primary">purA</name>
    <name type="ordered locus">NMA1024</name>
</gene>
<organism>
    <name type="scientific">Neisseria meningitidis serogroup A / serotype 4A (strain DSM 15465 / Z2491)</name>
    <dbReference type="NCBI Taxonomy" id="122587"/>
    <lineage>
        <taxon>Bacteria</taxon>
        <taxon>Pseudomonadati</taxon>
        <taxon>Pseudomonadota</taxon>
        <taxon>Betaproteobacteria</taxon>
        <taxon>Neisseriales</taxon>
        <taxon>Neisseriaceae</taxon>
        <taxon>Neisseria</taxon>
    </lineage>
</organism>
<sequence length="432" mass="45947">MAKNVVVIGAQWGDEGKGKIVDWLAEEAGGVVRFQGGHNAGHTLVVGGKKTILRLIPSGILHESLDCFIGSGVVVSPEALLGEIDELNAAGVKNVEGRLKIAPTCPLILPYHIALDQAREASRGKGKIGTTGRGIGPAYEDKVARRAIRAADLLHPEKLREKLDAVFAYYNVQLQHLHNAESVKAEDVMAVIEKVAPRITPMITDVSRVLNEKNKNGEKLLFEGAQGALLDIDYGTYPFVTSSNCLAGAASAGAGVGPQMLDYVLGIVKAYTTRVGSGPFPTELFDEVGAGLAERGHEFGSVTGRARRCGWFDAAALKRSIQINGISGMCITKLDVMDGVETINICVGYELPDGGKTDILPCGSDAVEACKPIYETMPGWSESTFGVKSYDALPANAKAYLKRIEEVCGAPVAIVSTGPDREETIVLHHPFA</sequence>
<accession>Q9JV25</accession>
<accession>A1IR61</accession>
<dbReference type="EC" id="6.3.4.4" evidence="1"/>
<dbReference type="EMBL" id="AL157959">
    <property type="protein sequence ID" value="CAM08245.1"/>
    <property type="molecule type" value="Genomic_DNA"/>
</dbReference>
<dbReference type="PIR" id="F81950">
    <property type="entry name" value="F81950"/>
</dbReference>
<dbReference type="RefSeq" id="WP_002246104.1">
    <property type="nucleotide sequence ID" value="NC_003116.1"/>
</dbReference>
<dbReference type="SMR" id="Q9JV25"/>
<dbReference type="EnsemblBacteria" id="CAM08245">
    <property type="protein sequence ID" value="CAM08245"/>
    <property type="gene ID" value="NMA1024"/>
</dbReference>
<dbReference type="KEGG" id="nma:NMA1024"/>
<dbReference type="HOGENOM" id="CLU_029848_0_0_4"/>
<dbReference type="UniPathway" id="UPA00075">
    <property type="reaction ID" value="UER00335"/>
</dbReference>
<dbReference type="Proteomes" id="UP000000626">
    <property type="component" value="Chromosome"/>
</dbReference>
<dbReference type="GO" id="GO:0005737">
    <property type="term" value="C:cytoplasm"/>
    <property type="evidence" value="ECO:0007669"/>
    <property type="project" value="UniProtKB-SubCell"/>
</dbReference>
<dbReference type="GO" id="GO:0004019">
    <property type="term" value="F:adenylosuccinate synthase activity"/>
    <property type="evidence" value="ECO:0007669"/>
    <property type="project" value="UniProtKB-UniRule"/>
</dbReference>
<dbReference type="GO" id="GO:0005525">
    <property type="term" value="F:GTP binding"/>
    <property type="evidence" value="ECO:0007669"/>
    <property type="project" value="UniProtKB-UniRule"/>
</dbReference>
<dbReference type="GO" id="GO:0000287">
    <property type="term" value="F:magnesium ion binding"/>
    <property type="evidence" value="ECO:0007669"/>
    <property type="project" value="UniProtKB-UniRule"/>
</dbReference>
<dbReference type="GO" id="GO:0044208">
    <property type="term" value="P:'de novo' AMP biosynthetic process"/>
    <property type="evidence" value="ECO:0007669"/>
    <property type="project" value="UniProtKB-UniRule"/>
</dbReference>
<dbReference type="GO" id="GO:0046040">
    <property type="term" value="P:IMP metabolic process"/>
    <property type="evidence" value="ECO:0007669"/>
    <property type="project" value="TreeGrafter"/>
</dbReference>
<dbReference type="CDD" id="cd03108">
    <property type="entry name" value="AdSS"/>
    <property type="match status" value="1"/>
</dbReference>
<dbReference type="FunFam" id="1.10.300.10:FF:000001">
    <property type="entry name" value="Adenylosuccinate synthetase"/>
    <property type="match status" value="1"/>
</dbReference>
<dbReference type="FunFam" id="3.90.170.10:FF:000001">
    <property type="entry name" value="Adenylosuccinate synthetase"/>
    <property type="match status" value="1"/>
</dbReference>
<dbReference type="Gene3D" id="3.40.440.10">
    <property type="entry name" value="Adenylosuccinate Synthetase, subunit A, domain 1"/>
    <property type="match status" value="1"/>
</dbReference>
<dbReference type="Gene3D" id="1.10.300.10">
    <property type="entry name" value="Adenylosuccinate Synthetase, subunit A, domain 2"/>
    <property type="match status" value="1"/>
</dbReference>
<dbReference type="Gene3D" id="3.90.170.10">
    <property type="entry name" value="Adenylosuccinate Synthetase, subunit A, domain 3"/>
    <property type="match status" value="1"/>
</dbReference>
<dbReference type="HAMAP" id="MF_00011">
    <property type="entry name" value="Adenylosucc_synth"/>
    <property type="match status" value="1"/>
</dbReference>
<dbReference type="InterPro" id="IPR018220">
    <property type="entry name" value="Adenylosuccin_syn_GTP-bd"/>
</dbReference>
<dbReference type="InterPro" id="IPR033128">
    <property type="entry name" value="Adenylosuccin_syn_Lys_AS"/>
</dbReference>
<dbReference type="InterPro" id="IPR042109">
    <property type="entry name" value="Adenylosuccinate_synth_dom1"/>
</dbReference>
<dbReference type="InterPro" id="IPR042110">
    <property type="entry name" value="Adenylosuccinate_synth_dom2"/>
</dbReference>
<dbReference type="InterPro" id="IPR042111">
    <property type="entry name" value="Adenylosuccinate_synth_dom3"/>
</dbReference>
<dbReference type="InterPro" id="IPR001114">
    <property type="entry name" value="Adenylosuccinate_synthetase"/>
</dbReference>
<dbReference type="InterPro" id="IPR027417">
    <property type="entry name" value="P-loop_NTPase"/>
</dbReference>
<dbReference type="NCBIfam" id="NF002223">
    <property type="entry name" value="PRK01117.1"/>
    <property type="match status" value="1"/>
</dbReference>
<dbReference type="NCBIfam" id="TIGR00184">
    <property type="entry name" value="purA"/>
    <property type="match status" value="1"/>
</dbReference>
<dbReference type="PANTHER" id="PTHR11846">
    <property type="entry name" value="ADENYLOSUCCINATE SYNTHETASE"/>
    <property type="match status" value="1"/>
</dbReference>
<dbReference type="PANTHER" id="PTHR11846:SF0">
    <property type="entry name" value="ADENYLOSUCCINATE SYNTHETASE"/>
    <property type="match status" value="1"/>
</dbReference>
<dbReference type="Pfam" id="PF00709">
    <property type="entry name" value="Adenylsucc_synt"/>
    <property type="match status" value="1"/>
</dbReference>
<dbReference type="SMART" id="SM00788">
    <property type="entry name" value="Adenylsucc_synt"/>
    <property type="match status" value="1"/>
</dbReference>
<dbReference type="SUPFAM" id="SSF52540">
    <property type="entry name" value="P-loop containing nucleoside triphosphate hydrolases"/>
    <property type="match status" value="1"/>
</dbReference>
<dbReference type="PROSITE" id="PS01266">
    <property type="entry name" value="ADENYLOSUCCIN_SYN_1"/>
    <property type="match status" value="1"/>
</dbReference>
<dbReference type="PROSITE" id="PS00513">
    <property type="entry name" value="ADENYLOSUCCIN_SYN_2"/>
    <property type="match status" value="1"/>
</dbReference>
<feature type="chain" id="PRO_0000095202" description="Adenylosuccinate synthetase">
    <location>
        <begin position="1"/>
        <end position="432"/>
    </location>
</feature>
<feature type="active site" description="Proton acceptor" evidence="1">
    <location>
        <position position="14"/>
    </location>
</feature>
<feature type="active site" description="Proton donor" evidence="1">
    <location>
        <position position="42"/>
    </location>
</feature>
<feature type="binding site" evidence="1">
    <location>
        <begin position="13"/>
        <end position="19"/>
    </location>
    <ligand>
        <name>GTP</name>
        <dbReference type="ChEBI" id="CHEBI:37565"/>
    </ligand>
</feature>
<feature type="binding site" description="in other chain" evidence="1">
    <location>
        <begin position="14"/>
        <end position="17"/>
    </location>
    <ligand>
        <name>IMP</name>
        <dbReference type="ChEBI" id="CHEBI:58053"/>
        <note>ligand shared between dimeric partners</note>
    </ligand>
</feature>
<feature type="binding site" evidence="1">
    <location>
        <position position="14"/>
    </location>
    <ligand>
        <name>Mg(2+)</name>
        <dbReference type="ChEBI" id="CHEBI:18420"/>
    </ligand>
</feature>
<feature type="binding site" description="in other chain" evidence="1">
    <location>
        <begin position="39"/>
        <end position="42"/>
    </location>
    <ligand>
        <name>IMP</name>
        <dbReference type="ChEBI" id="CHEBI:58053"/>
        <note>ligand shared between dimeric partners</note>
    </ligand>
</feature>
<feature type="binding site" evidence="1">
    <location>
        <begin position="41"/>
        <end position="43"/>
    </location>
    <ligand>
        <name>GTP</name>
        <dbReference type="ChEBI" id="CHEBI:37565"/>
    </ligand>
</feature>
<feature type="binding site" evidence="1">
    <location>
        <position position="41"/>
    </location>
    <ligand>
        <name>Mg(2+)</name>
        <dbReference type="ChEBI" id="CHEBI:18420"/>
    </ligand>
</feature>
<feature type="binding site" description="in other chain" evidence="1">
    <location>
        <position position="131"/>
    </location>
    <ligand>
        <name>IMP</name>
        <dbReference type="ChEBI" id="CHEBI:58053"/>
        <note>ligand shared between dimeric partners</note>
    </ligand>
</feature>
<feature type="binding site" evidence="1">
    <location>
        <position position="145"/>
    </location>
    <ligand>
        <name>IMP</name>
        <dbReference type="ChEBI" id="CHEBI:58053"/>
        <note>ligand shared between dimeric partners</note>
    </ligand>
</feature>
<feature type="binding site" description="in other chain" evidence="1">
    <location>
        <position position="226"/>
    </location>
    <ligand>
        <name>IMP</name>
        <dbReference type="ChEBI" id="CHEBI:58053"/>
        <note>ligand shared between dimeric partners</note>
    </ligand>
</feature>
<feature type="binding site" description="in other chain" evidence="1">
    <location>
        <position position="241"/>
    </location>
    <ligand>
        <name>IMP</name>
        <dbReference type="ChEBI" id="CHEBI:58053"/>
        <note>ligand shared between dimeric partners</note>
    </ligand>
</feature>
<feature type="binding site" evidence="1">
    <location>
        <begin position="301"/>
        <end position="307"/>
    </location>
    <ligand>
        <name>substrate</name>
    </ligand>
</feature>
<feature type="binding site" description="in other chain" evidence="1">
    <location>
        <position position="305"/>
    </location>
    <ligand>
        <name>IMP</name>
        <dbReference type="ChEBI" id="CHEBI:58053"/>
        <note>ligand shared between dimeric partners</note>
    </ligand>
</feature>
<feature type="binding site" evidence="1">
    <location>
        <position position="307"/>
    </location>
    <ligand>
        <name>GTP</name>
        <dbReference type="ChEBI" id="CHEBI:37565"/>
    </ligand>
</feature>
<feature type="binding site" evidence="1">
    <location>
        <begin position="333"/>
        <end position="335"/>
    </location>
    <ligand>
        <name>GTP</name>
        <dbReference type="ChEBI" id="CHEBI:37565"/>
    </ligand>
</feature>
<feature type="binding site" evidence="1">
    <location>
        <begin position="416"/>
        <end position="418"/>
    </location>
    <ligand>
        <name>GTP</name>
        <dbReference type="ChEBI" id="CHEBI:37565"/>
    </ligand>
</feature>